<sequence length="622" mass="70269">MSDEPVVKKTKVEDLPDTIVDSVYEKQLAEGRVRGVASIKPEYLVARASADARDAPPSVNDDLAEGGEKPEEKKKGGQNKNRSLKQRKDAIKMCSSALQFKEDGSPQECSYGDKCKFEHDLQKYLESKPKDIEGVCPVFDLTGQCPQGYKCRWLSSHRDSEGKLLVDEEKKKANADNKELNHVFKHLNPLQRKKYDLSKSDEAIKLIDAQIVRDEDDEQTKLEKKETIEIDTGRIRPSEKKKLDLKGKYIVSPLTTVGNLPYRRLMKDLGADVTYGEMALTLPLIQGHKAEWALTRCHSSEVTEGNHFGVQVTAPKHWQAIKAAQAVSELCTGISEINLNCGCPIDLVYRQGAGSALMDQQGKTARIVRGMSMVSGDVPITVKMRTGTGSTPTAKKLTARLLAEGQTAAFTLHGRSRAQRYTKLADWNYIREVADSVVNTRDDVREKSELDDHVISHPTWVVGNGDCYTWSDWHRAVDEAHVDSVMVARGALIKPWIFEEVESRQHIDKSATERLEYFQKFAQYGLEHWGSDQYGVNQTRRYLCEFMSFTHRYVPSGILEYLPAKMNDRPDLWKGRDEMETLLGSSDYRDWIKVTERFLGPVGDEFEFTPKHKSNAYPTESG</sequence>
<feature type="chain" id="PRO_0000330251" description="tRNA-dihydrouridine(47) synthase [NAD(P)(+)]">
    <location>
        <begin position="1"/>
        <end position="622"/>
    </location>
</feature>
<feature type="zinc finger region" description="C3H1-type 1" evidence="4">
    <location>
        <begin position="88"/>
        <end position="122"/>
    </location>
</feature>
<feature type="zinc finger region" description="C3H1-type 2" evidence="4">
    <location>
        <begin position="135"/>
        <end position="160"/>
    </location>
</feature>
<feature type="region of interest" description="Disordered" evidence="5">
    <location>
        <begin position="47"/>
        <end position="88"/>
    </location>
</feature>
<feature type="compositionally biased region" description="Low complexity" evidence="5">
    <location>
        <begin position="47"/>
        <end position="59"/>
    </location>
</feature>
<feature type="compositionally biased region" description="Basic and acidic residues" evidence="5">
    <location>
        <begin position="66"/>
        <end position="75"/>
    </location>
</feature>
<feature type="active site" description="Proton donor" evidence="2">
    <location>
        <position position="343"/>
    </location>
</feature>
<feature type="binding site" evidence="2">
    <location>
        <begin position="253"/>
        <end position="255"/>
    </location>
    <ligand>
        <name>FMN</name>
        <dbReference type="ChEBI" id="CHEBI:58210"/>
    </ligand>
</feature>
<feature type="binding site" evidence="2">
    <location>
        <position position="311"/>
    </location>
    <ligand>
        <name>FMN</name>
        <dbReference type="ChEBI" id="CHEBI:58210"/>
    </ligand>
</feature>
<feature type="binding site" evidence="2">
    <location>
        <position position="383"/>
    </location>
    <ligand>
        <name>FMN</name>
        <dbReference type="ChEBI" id="CHEBI:58210"/>
    </ligand>
</feature>
<feature type="binding site" evidence="2">
    <location>
        <position position="413"/>
    </location>
    <ligand>
        <name>FMN</name>
        <dbReference type="ChEBI" id="CHEBI:58210"/>
    </ligand>
</feature>
<feature type="binding site" evidence="2">
    <location>
        <begin position="464"/>
        <end position="466"/>
    </location>
    <ligand>
        <name>FMN</name>
        <dbReference type="ChEBI" id="CHEBI:58210"/>
    </ligand>
</feature>
<feature type="binding site" evidence="2">
    <location>
        <begin position="488"/>
        <end position="489"/>
    </location>
    <ligand>
        <name>FMN</name>
        <dbReference type="ChEBI" id="CHEBI:58210"/>
    </ligand>
</feature>
<organism>
    <name type="scientific">Yarrowia lipolytica (strain CLIB 122 / E 150)</name>
    <name type="common">Yeast</name>
    <name type="synonym">Candida lipolytica</name>
    <dbReference type="NCBI Taxonomy" id="284591"/>
    <lineage>
        <taxon>Eukaryota</taxon>
        <taxon>Fungi</taxon>
        <taxon>Dikarya</taxon>
        <taxon>Ascomycota</taxon>
        <taxon>Saccharomycotina</taxon>
        <taxon>Dipodascomycetes</taxon>
        <taxon>Dipodascales</taxon>
        <taxon>Dipodascales incertae sedis</taxon>
        <taxon>Yarrowia</taxon>
    </lineage>
</organism>
<protein>
    <recommendedName>
        <fullName>tRNA-dihydrouridine(47) synthase [NAD(P)(+)]</fullName>
        <ecNumber evidence="1">1.3.1.89</ecNumber>
    </recommendedName>
    <alternativeName>
        <fullName>mRNA-dihydrouridine synthase DUS3</fullName>
        <ecNumber evidence="3">1.3.1.-</ecNumber>
    </alternativeName>
    <alternativeName>
        <fullName>tRNA-dihydrouridine synthase 3</fullName>
    </alternativeName>
</protein>
<evidence type="ECO:0000250" key="1">
    <source>
        <dbReference type="UniProtKB" id="Q06053"/>
    </source>
</evidence>
<evidence type="ECO:0000250" key="2">
    <source>
        <dbReference type="UniProtKB" id="Q5SMC7"/>
    </source>
</evidence>
<evidence type="ECO:0000250" key="3">
    <source>
        <dbReference type="UniProtKB" id="Q9UTH9"/>
    </source>
</evidence>
<evidence type="ECO:0000255" key="4">
    <source>
        <dbReference type="PROSITE-ProRule" id="PRU00723"/>
    </source>
</evidence>
<evidence type="ECO:0000256" key="5">
    <source>
        <dbReference type="SAM" id="MobiDB-lite"/>
    </source>
</evidence>
<evidence type="ECO:0000305" key="6"/>
<reference key="1">
    <citation type="journal article" date="2004" name="Nature">
        <title>Genome evolution in yeasts.</title>
        <authorList>
            <person name="Dujon B."/>
            <person name="Sherman D."/>
            <person name="Fischer G."/>
            <person name="Durrens P."/>
            <person name="Casaregola S."/>
            <person name="Lafontaine I."/>
            <person name="de Montigny J."/>
            <person name="Marck C."/>
            <person name="Neuveglise C."/>
            <person name="Talla E."/>
            <person name="Goffard N."/>
            <person name="Frangeul L."/>
            <person name="Aigle M."/>
            <person name="Anthouard V."/>
            <person name="Babour A."/>
            <person name="Barbe V."/>
            <person name="Barnay S."/>
            <person name="Blanchin S."/>
            <person name="Beckerich J.-M."/>
            <person name="Beyne E."/>
            <person name="Bleykasten C."/>
            <person name="Boisrame A."/>
            <person name="Boyer J."/>
            <person name="Cattolico L."/>
            <person name="Confanioleri F."/>
            <person name="de Daruvar A."/>
            <person name="Despons L."/>
            <person name="Fabre E."/>
            <person name="Fairhead C."/>
            <person name="Ferry-Dumazet H."/>
            <person name="Groppi A."/>
            <person name="Hantraye F."/>
            <person name="Hennequin C."/>
            <person name="Jauniaux N."/>
            <person name="Joyet P."/>
            <person name="Kachouri R."/>
            <person name="Kerrest A."/>
            <person name="Koszul R."/>
            <person name="Lemaire M."/>
            <person name="Lesur I."/>
            <person name="Ma L."/>
            <person name="Muller H."/>
            <person name="Nicaud J.-M."/>
            <person name="Nikolski M."/>
            <person name="Oztas S."/>
            <person name="Ozier-Kalogeropoulos O."/>
            <person name="Pellenz S."/>
            <person name="Potier S."/>
            <person name="Richard G.-F."/>
            <person name="Straub M.-L."/>
            <person name="Suleau A."/>
            <person name="Swennen D."/>
            <person name="Tekaia F."/>
            <person name="Wesolowski-Louvel M."/>
            <person name="Westhof E."/>
            <person name="Wirth B."/>
            <person name="Zeniou-Meyer M."/>
            <person name="Zivanovic Y."/>
            <person name="Bolotin-Fukuhara M."/>
            <person name="Thierry A."/>
            <person name="Bouchier C."/>
            <person name="Caudron B."/>
            <person name="Scarpelli C."/>
            <person name="Gaillardin C."/>
            <person name="Weissenbach J."/>
            <person name="Wincker P."/>
            <person name="Souciet J.-L."/>
        </authorList>
    </citation>
    <scope>NUCLEOTIDE SEQUENCE [LARGE SCALE GENOMIC DNA]</scope>
    <source>
        <strain>CLIB 122 / E 150</strain>
    </source>
</reference>
<accession>Q6C4K3</accession>
<dbReference type="EC" id="1.3.1.89" evidence="1"/>
<dbReference type="EC" id="1.3.1.-" evidence="3"/>
<dbReference type="EMBL" id="CR382131">
    <property type="protein sequence ID" value="CAG80010.1"/>
    <property type="molecule type" value="Genomic_DNA"/>
</dbReference>
<dbReference type="RefSeq" id="XP_504409.1">
    <property type="nucleotide sequence ID" value="XM_504409.1"/>
</dbReference>
<dbReference type="SMR" id="Q6C4K3"/>
<dbReference type="FunCoup" id="Q6C4K3">
    <property type="interactions" value="927"/>
</dbReference>
<dbReference type="STRING" id="284591.Q6C4K3"/>
<dbReference type="EnsemblFungi" id="CAG80010">
    <property type="protein sequence ID" value="CAG80010"/>
    <property type="gene ID" value="YALI0_E26048g"/>
</dbReference>
<dbReference type="KEGG" id="yli:2912622"/>
<dbReference type="VEuPathDB" id="FungiDB:YALI0_E26048g"/>
<dbReference type="HOGENOM" id="CLU_013299_7_0_1"/>
<dbReference type="InParanoid" id="Q6C4K3"/>
<dbReference type="OMA" id="WSYIAEC"/>
<dbReference type="OrthoDB" id="594at4891"/>
<dbReference type="Proteomes" id="UP000001300">
    <property type="component" value="Chromosome E"/>
</dbReference>
<dbReference type="GO" id="GO:0005737">
    <property type="term" value="C:cytoplasm"/>
    <property type="evidence" value="ECO:0007669"/>
    <property type="project" value="UniProtKB-SubCell"/>
</dbReference>
<dbReference type="GO" id="GO:0005634">
    <property type="term" value="C:nucleus"/>
    <property type="evidence" value="ECO:0007669"/>
    <property type="project" value="UniProtKB-SubCell"/>
</dbReference>
<dbReference type="GO" id="GO:0050660">
    <property type="term" value="F:flavin adenine dinucleotide binding"/>
    <property type="evidence" value="ECO:0007669"/>
    <property type="project" value="InterPro"/>
</dbReference>
<dbReference type="GO" id="GO:0106414">
    <property type="term" value="F:mRNA dihydrouridine synthase activity"/>
    <property type="evidence" value="ECO:0007669"/>
    <property type="project" value="RHEA"/>
</dbReference>
<dbReference type="GO" id="GO:0017150">
    <property type="term" value="F:tRNA dihydrouridine synthase activity"/>
    <property type="evidence" value="ECO:0000318"/>
    <property type="project" value="GO_Central"/>
</dbReference>
<dbReference type="GO" id="GO:0102265">
    <property type="term" value="F:tRNA-dihydrouridine47 synthase activity"/>
    <property type="evidence" value="ECO:0007669"/>
    <property type="project" value="UniProtKB-EC"/>
</dbReference>
<dbReference type="GO" id="GO:0008270">
    <property type="term" value="F:zinc ion binding"/>
    <property type="evidence" value="ECO:0007669"/>
    <property type="project" value="UniProtKB-KW"/>
</dbReference>
<dbReference type="GO" id="GO:0006397">
    <property type="term" value="P:mRNA processing"/>
    <property type="evidence" value="ECO:0007669"/>
    <property type="project" value="UniProtKB-KW"/>
</dbReference>
<dbReference type="CDD" id="cd02801">
    <property type="entry name" value="DUS_like_FMN"/>
    <property type="match status" value="1"/>
</dbReference>
<dbReference type="FunFam" id="3.20.20.70:FF:000145">
    <property type="entry name" value="tRNA-dihydrouridine(47) synthase [NAD(P)(+)]"/>
    <property type="match status" value="1"/>
</dbReference>
<dbReference type="FunFam" id="4.10.1000.10:FF:000029">
    <property type="entry name" value="tRNA-dihydrouridine(47) synthase [NAD(P)(+)]"/>
    <property type="match status" value="1"/>
</dbReference>
<dbReference type="Gene3D" id="3.20.20.70">
    <property type="entry name" value="Aldolase class I"/>
    <property type="match status" value="1"/>
</dbReference>
<dbReference type="Gene3D" id="4.10.1000.10">
    <property type="entry name" value="Zinc finger, CCCH-type"/>
    <property type="match status" value="1"/>
</dbReference>
<dbReference type="InterPro" id="IPR013785">
    <property type="entry name" value="Aldolase_TIM"/>
</dbReference>
<dbReference type="InterPro" id="IPR035587">
    <property type="entry name" value="DUS-like_FMN-bd"/>
</dbReference>
<dbReference type="InterPro" id="IPR018517">
    <property type="entry name" value="tRNA_hU_synthase_CS"/>
</dbReference>
<dbReference type="InterPro" id="IPR000571">
    <property type="entry name" value="Znf_CCCH"/>
</dbReference>
<dbReference type="PANTHER" id="PTHR45846">
    <property type="entry name" value="TRNA-DIHYDROURIDINE(47) SYNTHASE [NAD(P)(+)]-LIKE"/>
    <property type="match status" value="1"/>
</dbReference>
<dbReference type="PANTHER" id="PTHR45846:SF1">
    <property type="entry name" value="TRNA-DIHYDROURIDINE(47) SYNTHASE [NAD(P)(+)]-LIKE"/>
    <property type="match status" value="1"/>
</dbReference>
<dbReference type="Pfam" id="PF01207">
    <property type="entry name" value="Dus"/>
    <property type="match status" value="1"/>
</dbReference>
<dbReference type="SUPFAM" id="SSF51395">
    <property type="entry name" value="FMN-linked oxidoreductases"/>
    <property type="match status" value="1"/>
</dbReference>
<dbReference type="PROSITE" id="PS01136">
    <property type="entry name" value="UPF0034"/>
    <property type="match status" value="1"/>
</dbReference>
<dbReference type="PROSITE" id="PS50103">
    <property type="entry name" value="ZF_C3H1"/>
    <property type="match status" value="2"/>
</dbReference>
<gene>
    <name type="primary">DUS3</name>
    <name type="ordered locus">YALI0E26048g</name>
</gene>
<proteinExistence type="inferred from homology"/>
<keyword id="KW-0963">Cytoplasm</keyword>
<keyword id="KW-0285">Flavoprotein</keyword>
<keyword id="KW-0288">FMN</keyword>
<keyword id="KW-0479">Metal-binding</keyword>
<keyword id="KW-0507">mRNA processing</keyword>
<keyword id="KW-0520">NAD</keyword>
<keyword id="KW-0521">NADP</keyword>
<keyword id="KW-0539">Nucleus</keyword>
<keyword id="KW-0560">Oxidoreductase</keyword>
<keyword id="KW-1185">Reference proteome</keyword>
<keyword id="KW-0677">Repeat</keyword>
<keyword id="KW-0819">tRNA processing</keyword>
<keyword id="KW-0862">Zinc</keyword>
<keyword id="KW-0863">Zinc-finger</keyword>
<comment type="function">
    <text evidence="1 3">Catalyzes the synthesis of dihydrouridine, a modified base found in the D-loop of most tRNAs. Specifically modifies U47 in cytoplasmic tRNAs (By similarity). Catalyzes the synthesis of dihydrouridine in some mRNAs, thereby affecting their translation (By similarity).</text>
</comment>
<comment type="catalytic activity">
    <reaction evidence="1">
        <text>5,6-dihydrouridine(47) in tRNA + NAD(+) = uridine(47) in tRNA + NADH + H(+)</text>
        <dbReference type="Rhea" id="RHEA:53364"/>
        <dbReference type="Rhea" id="RHEA-COMP:13539"/>
        <dbReference type="Rhea" id="RHEA-COMP:13540"/>
        <dbReference type="ChEBI" id="CHEBI:15378"/>
        <dbReference type="ChEBI" id="CHEBI:57540"/>
        <dbReference type="ChEBI" id="CHEBI:57945"/>
        <dbReference type="ChEBI" id="CHEBI:65315"/>
        <dbReference type="ChEBI" id="CHEBI:74443"/>
        <dbReference type="EC" id="1.3.1.89"/>
    </reaction>
    <physiologicalReaction direction="right-to-left" evidence="1">
        <dbReference type="Rhea" id="RHEA:53366"/>
    </physiologicalReaction>
</comment>
<comment type="catalytic activity">
    <reaction evidence="1">
        <text>5,6-dihydrouridine(47) in tRNA + NADP(+) = uridine(47) in tRNA + NADPH + H(+)</text>
        <dbReference type="Rhea" id="RHEA:53360"/>
        <dbReference type="Rhea" id="RHEA-COMP:13539"/>
        <dbReference type="Rhea" id="RHEA-COMP:13540"/>
        <dbReference type="ChEBI" id="CHEBI:15378"/>
        <dbReference type="ChEBI" id="CHEBI:57783"/>
        <dbReference type="ChEBI" id="CHEBI:58349"/>
        <dbReference type="ChEBI" id="CHEBI:65315"/>
        <dbReference type="ChEBI" id="CHEBI:74443"/>
        <dbReference type="EC" id="1.3.1.89"/>
    </reaction>
    <physiologicalReaction direction="right-to-left" evidence="1">
        <dbReference type="Rhea" id="RHEA:53362"/>
    </physiologicalReaction>
</comment>
<comment type="catalytic activity">
    <reaction evidence="3">
        <text>a 5,6-dihydrouridine in mRNA + NAD(+) = a uridine in mRNA + NADH + H(+)</text>
        <dbReference type="Rhea" id="RHEA:69851"/>
        <dbReference type="Rhea" id="RHEA-COMP:14658"/>
        <dbReference type="Rhea" id="RHEA-COMP:17789"/>
        <dbReference type="ChEBI" id="CHEBI:15378"/>
        <dbReference type="ChEBI" id="CHEBI:57540"/>
        <dbReference type="ChEBI" id="CHEBI:57945"/>
        <dbReference type="ChEBI" id="CHEBI:65315"/>
        <dbReference type="ChEBI" id="CHEBI:74443"/>
    </reaction>
    <physiologicalReaction direction="right-to-left" evidence="3">
        <dbReference type="Rhea" id="RHEA:69853"/>
    </physiologicalReaction>
</comment>
<comment type="catalytic activity">
    <reaction evidence="3">
        <text>a 5,6-dihydrouridine in mRNA + NADP(+) = a uridine in mRNA + NADPH + H(+)</text>
        <dbReference type="Rhea" id="RHEA:69855"/>
        <dbReference type="Rhea" id="RHEA-COMP:14658"/>
        <dbReference type="Rhea" id="RHEA-COMP:17789"/>
        <dbReference type="ChEBI" id="CHEBI:15378"/>
        <dbReference type="ChEBI" id="CHEBI:57783"/>
        <dbReference type="ChEBI" id="CHEBI:58349"/>
        <dbReference type="ChEBI" id="CHEBI:65315"/>
        <dbReference type="ChEBI" id="CHEBI:74443"/>
    </reaction>
    <physiologicalReaction direction="right-to-left" evidence="3">
        <dbReference type="Rhea" id="RHEA:69857"/>
    </physiologicalReaction>
</comment>
<comment type="cofactor">
    <cofactor evidence="2">
        <name>FMN</name>
        <dbReference type="ChEBI" id="CHEBI:58210"/>
    </cofactor>
</comment>
<comment type="subcellular location">
    <subcellularLocation>
        <location evidence="1">Cytoplasm</location>
    </subcellularLocation>
    <subcellularLocation>
        <location evidence="1">Nucleus</location>
    </subcellularLocation>
</comment>
<comment type="similarity">
    <text evidence="6">Belongs to the Dus family. Dus3 subfamily.</text>
</comment>
<name>DUS3_YARLI</name>